<dbReference type="EMBL" id="CR858199">
    <property type="protein sequence ID" value="CAH90437.1"/>
    <property type="molecule type" value="mRNA"/>
</dbReference>
<dbReference type="RefSeq" id="NP_001127287.1">
    <property type="nucleotide sequence ID" value="NM_001133815.1"/>
</dbReference>
<dbReference type="RefSeq" id="XP_009236371.1">
    <property type="nucleotide sequence ID" value="XM_009238096.3"/>
</dbReference>
<dbReference type="RefSeq" id="XP_009236372.1">
    <property type="nucleotide sequence ID" value="XM_009238097.1"/>
</dbReference>
<dbReference type="RefSeq" id="XP_024098774.1">
    <property type="nucleotide sequence ID" value="XM_024243006.3"/>
</dbReference>
<dbReference type="RefSeq" id="XP_054404754.1">
    <property type="nucleotide sequence ID" value="XM_054548779.2"/>
</dbReference>
<dbReference type="RefSeq" id="XP_063568620.1">
    <property type="nucleotide sequence ID" value="XM_063712550.1"/>
</dbReference>
<dbReference type="SMR" id="Q5RCS0"/>
<dbReference type="FunCoup" id="Q5RCS0">
    <property type="interactions" value="3116"/>
</dbReference>
<dbReference type="STRING" id="9601.ENSPPYP00000014748"/>
<dbReference type="GlyCosmos" id="Q5RCS0">
    <property type="glycosylation" value="1 site, No reported glycans"/>
</dbReference>
<dbReference type="Ensembl" id="ENSPPYT00000015345.2">
    <property type="protein sequence ID" value="ENSPPYP00000014748.2"/>
    <property type="gene ID" value="ENSPPYG00000013199.2"/>
</dbReference>
<dbReference type="GeneID" id="100174344"/>
<dbReference type="KEGG" id="pon:100174344"/>
<dbReference type="CTD" id="79065"/>
<dbReference type="eggNOG" id="KOG2173">
    <property type="taxonomic scope" value="Eukaryota"/>
</dbReference>
<dbReference type="GeneTree" id="ENSGT00390000014839"/>
<dbReference type="InParanoid" id="Q5RCS0"/>
<dbReference type="OMA" id="IPTGECV"/>
<dbReference type="OrthoDB" id="2020634at2759"/>
<dbReference type="Proteomes" id="UP000001595">
    <property type="component" value="Chromosome 2B"/>
</dbReference>
<dbReference type="GO" id="GO:0000421">
    <property type="term" value="C:autophagosome membrane"/>
    <property type="evidence" value="ECO:0007669"/>
    <property type="project" value="UniProtKB-SubCell"/>
</dbReference>
<dbReference type="GO" id="GO:0005789">
    <property type="term" value="C:endoplasmic reticulum membrane"/>
    <property type="evidence" value="ECO:0000250"/>
    <property type="project" value="UniProtKB"/>
</dbReference>
<dbReference type="GO" id="GO:0005794">
    <property type="term" value="C:Golgi apparatus"/>
    <property type="evidence" value="ECO:0000250"/>
    <property type="project" value="UniProtKB"/>
</dbReference>
<dbReference type="GO" id="GO:0000139">
    <property type="term" value="C:Golgi membrane"/>
    <property type="evidence" value="ECO:0000250"/>
    <property type="project" value="UniProtKB"/>
</dbReference>
<dbReference type="GO" id="GO:0031902">
    <property type="term" value="C:late endosome membrane"/>
    <property type="evidence" value="ECO:0007669"/>
    <property type="project" value="UniProtKB-SubCell"/>
</dbReference>
<dbReference type="GO" id="GO:0031966">
    <property type="term" value="C:mitochondrial membrane"/>
    <property type="evidence" value="ECO:0007669"/>
    <property type="project" value="UniProtKB-SubCell"/>
</dbReference>
<dbReference type="GO" id="GO:0005739">
    <property type="term" value="C:mitochondrion"/>
    <property type="evidence" value="ECO:0000250"/>
    <property type="project" value="UniProtKB"/>
</dbReference>
<dbReference type="GO" id="GO:0034045">
    <property type="term" value="C:phagophore assembly site membrane"/>
    <property type="evidence" value="ECO:0007669"/>
    <property type="project" value="UniProtKB-SubCell"/>
</dbReference>
<dbReference type="GO" id="GO:0055038">
    <property type="term" value="C:recycling endosome membrane"/>
    <property type="evidence" value="ECO:0000250"/>
    <property type="project" value="UniProtKB"/>
</dbReference>
<dbReference type="GO" id="GO:0097060">
    <property type="term" value="C:synaptic membrane"/>
    <property type="evidence" value="ECO:0007669"/>
    <property type="project" value="Ensembl"/>
</dbReference>
<dbReference type="GO" id="GO:0005802">
    <property type="term" value="C:trans-Golgi network"/>
    <property type="evidence" value="ECO:0000250"/>
    <property type="project" value="UniProtKB"/>
</dbReference>
<dbReference type="GO" id="GO:0017128">
    <property type="term" value="F:phospholipid scramblase activity"/>
    <property type="evidence" value="ECO:0000250"/>
    <property type="project" value="UniProtKB"/>
</dbReference>
<dbReference type="GO" id="GO:0000045">
    <property type="term" value="P:autophagosome assembly"/>
    <property type="evidence" value="ECO:0000250"/>
    <property type="project" value="UniProtKB"/>
</dbReference>
<dbReference type="GO" id="GO:0000422">
    <property type="term" value="P:autophagy of mitochondrion"/>
    <property type="evidence" value="ECO:0007669"/>
    <property type="project" value="TreeGrafter"/>
</dbReference>
<dbReference type="GO" id="GO:0060349">
    <property type="term" value="P:bone morphogenesis"/>
    <property type="evidence" value="ECO:0000250"/>
    <property type="project" value="UniProtKB"/>
</dbReference>
<dbReference type="GO" id="GO:0045087">
    <property type="term" value="P:innate immune response"/>
    <property type="evidence" value="ECO:0007669"/>
    <property type="project" value="Ensembl"/>
</dbReference>
<dbReference type="GO" id="GO:0032688">
    <property type="term" value="P:negative regulation of interferon-beta production"/>
    <property type="evidence" value="ECO:0007669"/>
    <property type="project" value="Ensembl"/>
</dbReference>
<dbReference type="GO" id="GO:0010936">
    <property type="term" value="P:negative regulation of macrophage cytokine production"/>
    <property type="evidence" value="ECO:0007669"/>
    <property type="project" value="Ensembl"/>
</dbReference>
<dbReference type="GO" id="GO:0034727">
    <property type="term" value="P:piecemeal microautophagy of the nucleus"/>
    <property type="evidence" value="ECO:0007669"/>
    <property type="project" value="TreeGrafter"/>
</dbReference>
<dbReference type="GO" id="GO:0097300">
    <property type="term" value="P:programmed necrotic cell death"/>
    <property type="evidence" value="ECO:0000250"/>
    <property type="project" value="UniProtKB"/>
</dbReference>
<dbReference type="GO" id="GO:0034067">
    <property type="term" value="P:protein localization to Golgi apparatus"/>
    <property type="evidence" value="ECO:0007669"/>
    <property type="project" value="Ensembl"/>
</dbReference>
<dbReference type="GO" id="GO:0034497">
    <property type="term" value="P:protein localization to phagophore assembly site"/>
    <property type="evidence" value="ECO:0007669"/>
    <property type="project" value="TreeGrafter"/>
</dbReference>
<dbReference type="GO" id="GO:0061709">
    <property type="term" value="P:reticulophagy"/>
    <property type="evidence" value="ECO:0007669"/>
    <property type="project" value="TreeGrafter"/>
</dbReference>
<dbReference type="InterPro" id="IPR007241">
    <property type="entry name" value="Autophagy-rel_prot_9"/>
</dbReference>
<dbReference type="PANTHER" id="PTHR13038">
    <property type="entry name" value="APG9 AUTOPHAGY 9"/>
    <property type="match status" value="1"/>
</dbReference>
<dbReference type="PANTHER" id="PTHR13038:SF13">
    <property type="entry name" value="AUTOPHAGY-RELATED PROTEIN 9A"/>
    <property type="match status" value="1"/>
</dbReference>
<dbReference type="Pfam" id="PF04109">
    <property type="entry name" value="ATG9"/>
    <property type="match status" value="1"/>
</dbReference>
<accession>Q5RCS0</accession>
<name>ATG9A_PONAB</name>
<organism>
    <name type="scientific">Pongo abelii</name>
    <name type="common">Sumatran orangutan</name>
    <name type="synonym">Pongo pygmaeus abelii</name>
    <dbReference type="NCBI Taxonomy" id="9601"/>
    <lineage>
        <taxon>Eukaryota</taxon>
        <taxon>Metazoa</taxon>
        <taxon>Chordata</taxon>
        <taxon>Craniata</taxon>
        <taxon>Vertebrata</taxon>
        <taxon>Euteleostomi</taxon>
        <taxon>Mammalia</taxon>
        <taxon>Eutheria</taxon>
        <taxon>Euarchontoglires</taxon>
        <taxon>Primates</taxon>
        <taxon>Haplorrhini</taxon>
        <taxon>Catarrhini</taxon>
        <taxon>Hominidae</taxon>
        <taxon>Pongo</taxon>
    </lineage>
</organism>
<proteinExistence type="evidence at transcript level"/>
<keyword id="KW-0007">Acetylation</keyword>
<keyword id="KW-0072">Autophagy</keyword>
<keyword id="KW-0968">Cytoplasmic vesicle</keyword>
<keyword id="KW-0256">Endoplasmic reticulum</keyword>
<keyword id="KW-0967">Endosome</keyword>
<keyword id="KW-0325">Glycoprotein</keyword>
<keyword id="KW-0333">Golgi apparatus</keyword>
<keyword id="KW-0445">Lipid transport</keyword>
<keyword id="KW-0472">Membrane</keyword>
<keyword id="KW-0496">Mitochondrion</keyword>
<keyword id="KW-0597">Phosphoprotein</keyword>
<keyword id="KW-1185">Reference proteome</keyword>
<keyword id="KW-0812">Transmembrane</keyword>
<keyword id="KW-1133">Transmembrane helix</keyword>
<keyword id="KW-0813">Transport</keyword>
<keyword id="KW-0832">Ubl conjugation</keyword>
<feature type="initiator methionine" description="Removed" evidence="2">
    <location>
        <position position="1"/>
    </location>
</feature>
<feature type="chain" id="PRO_0000119822" description="Autophagy-related protein 9A">
    <location>
        <begin position="2"/>
        <end position="839"/>
    </location>
</feature>
<feature type="topological domain" description="Cytoplasmic" evidence="5">
    <location>
        <begin position="2"/>
        <end position="61"/>
    </location>
</feature>
<feature type="transmembrane region" description="Helical" evidence="2">
    <location>
        <begin position="62"/>
        <end position="84"/>
    </location>
</feature>
<feature type="topological domain" description="Lumenal" evidence="5">
    <location>
        <begin position="85"/>
        <end position="128"/>
    </location>
</feature>
<feature type="transmembrane region" description="Helical" evidence="2">
    <location>
        <begin position="129"/>
        <end position="154"/>
    </location>
</feature>
<feature type="topological domain" description="Cytoplasmic" evidence="5">
    <location>
        <begin position="155"/>
        <end position="290"/>
    </location>
</feature>
<feature type="intramembrane region" evidence="2">
    <location>
        <begin position="291"/>
        <end position="301"/>
    </location>
</feature>
<feature type="topological domain" description="Cytoplasmic" evidence="5">
    <location>
        <begin position="302"/>
        <end position="319"/>
    </location>
</feature>
<feature type="intramembrane region" evidence="2">
    <location>
        <begin position="320"/>
        <end position="328"/>
    </location>
</feature>
<feature type="topological domain" description="Cytoplasmic" evidence="5">
    <location>
        <begin position="329"/>
        <end position="371"/>
    </location>
</feature>
<feature type="transmembrane region" description="Helical" evidence="2">
    <location>
        <begin position="372"/>
        <end position="397"/>
    </location>
</feature>
<feature type="topological domain" description="Lumenal" evidence="5">
    <location>
        <begin position="398"/>
        <end position="406"/>
    </location>
</feature>
<feature type="transmembrane region" description="Helical" evidence="2">
    <location>
        <begin position="407"/>
        <end position="424"/>
    </location>
</feature>
<feature type="topological domain" description="Cytoplasmic" evidence="5">
    <location>
        <begin position="425"/>
        <end position="470"/>
    </location>
</feature>
<feature type="intramembrane region" evidence="2">
    <location>
        <begin position="471"/>
        <end position="480"/>
    </location>
</feature>
<feature type="topological domain" description="Cytoplasmic" evidence="5">
    <location>
        <begin position="481"/>
        <end position="483"/>
    </location>
</feature>
<feature type="intramembrane region" evidence="2">
    <location>
        <begin position="484"/>
        <end position="492"/>
    </location>
</feature>
<feature type="topological domain" description="Cytoplasmic" evidence="5">
    <location>
        <begin position="493"/>
        <end position="839"/>
    </location>
</feature>
<feature type="region of interest" description="Disordered" evidence="4">
    <location>
        <begin position="1"/>
        <end position="20"/>
    </location>
</feature>
<feature type="region of interest" description="Disordered" evidence="4">
    <location>
        <begin position="656"/>
        <end position="686"/>
    </location>
</feature>
<feature type="region of interest" description="Disordered" evidence="4">
    <location>
        <begin position="719"/>
        <end position="839"/>
    </location>
</feature>
<feature type="short sequence motif" description="Tyrosine-based sorting signal" evidence="2">
    <location>
        <begin position="8"/>
        <end position="11"/>
    </location>
</feature>
<feature type="compositionally biased region" description="Basic and acidic residues" evidence="4">
    <location>
        <begin position="724"/>
        <end position="736"/>
    </location>
</feature>
<feature type="compositionally biased region" description="Acidic residues" evidence="4">
    <location>
        <begin position="737"/>
        <end position="747"/>
    </location>
</feature>
<feature type="compositionally biased region" description="Acidic residues" evidence="4">
    <location>
        <begin position="823"/>
        <end position="832"/>
    </location>
</feature>
<feature type="modified residue" description="N-acetylalanine" evidence="2">
    <location>
        <position position="2"/>
    </location>
</feature>
<feature type="modified residue" description="Phosphoserine" evidence="2">
    <location>
        <position position="14"/>
    </location>
</feature>
<feature type="modified residue" description="Phosphoserine" evidence="1">
    <location>
        <position position="16"/>
    </location>
</feature>
<feature type="modified residue" description="Phosphoserine" evidence="2">
    <location>
        <position position="18"/>
    </location>
</feature>
<feature type="modified residue" description="Phosphoserine" evidence="2">
    <location>
        <position position="656"/>
    </location>
</feature>
<feature type="modified residue" description="Phosphoserine" evidence="2">
    <location>
        <position position="735"/>
    </location>
</feature>
<feature type="modified residue" description="Phosphoserine" evidence="2">
    <location>
        <position position="738"/>
    </location>
</feature>
<feature type="modified residue" description="Phosphoserine" evidence="2">
    <location>
        <position position="741"/>
    </location>
</feature>
<feature type="modified residue" description="Phosphoserine" evidence="2">
    <location>
        <position position="828"/>
    </location>
</feature>
<feature type="glycosylation site" description="N-linked (GlcNAc...) asparagine" evidence="3">
    <location>
        <position position="99"/>
    </location>
</feature>
<reference key="1">
    <citation type="submission" date="2004-11" db="EMBL/GenBank/DDBJ databases">
        <authorList>
            <consortium name="The German cDNA consortium"/>
        </authorList>
    </citation>
    <scope>NUCLEOTIDE SEQUENCE [LARGE SCALE MRNA]</scope>
    <source>
        <tissue>Brain cortex</tissue>
    </source>
</reference>
<evidence type="ECO:0000250" key="1">
    <source>
        <dbReference type="UniProtKB" id="Q68FE2"/>
    </source>
</evidence>
<evidence type="ECO:0000250" key="2">
    <source>
        <dbReference type="UniProtKB" id="Q7Z3C6"/>
    </source>
</evidence>
<evidence type="ECO:0000255" key="3"/>
<evidence type="ECO:0000256" key="4">
    <source>
        <dbReference type="SAM" id="MobiDB-lite"/>
    </source>
</evidence>
<evidence type="ECO:0000305" key="5"/>
<gene>
    <name evidence="2" type="primary">ATG9A</name>
    <name evidence="2" type="synonym">APG9L1</name>
</gene>
<protein>
    <recommendedName>
        <fullName evidence="5">Autophagy-related protein 9A</fullName>
    </recommendedName>
    <alternativeName>
        <fullName evidence="2">APG9-like 1</fullName>
    </alternativeName>
</protein>
<sequence length="839" mass="94433">MAQFDTEYQRLEASYSDSPPGEEDLLVHVAEGSKSPWHHIENLDLFFSRVYNLHQKNGFTCMLIGEIFELMQFLFVVAFTTFLVSCVDYDILFANKMVNHSLHPTEPVKVTLPDAFLPAQVCSARIQENGSLITILVIAGVFWIHRLIKFIYNICCYWEIHSFYLHALRIPMSALPYCTWQEVQARIVQTQKEHQICIHKRELTELDIYHRILRFQNYMVALVNKSLLPLRFRLPGLGEAVFFTRGLKYNFELILFWGPGSLFLNEWSLKAEYKRGGQRLELAQRLSNRILWIGIANFLLCPLILIWQILYAFFSYAEVLKREPGALGARCWSLYGRCYLRHFNELEHELQSRLNRGYKPASKYMNCFLSPLLTLLAKNGAFFAGSILAVLIALTIYDEDVLAVEHVLTTVTLLGVTVTVCRSFIPDQHMVFCPEQLLRVILAHIHYMPDHWQGNAHRSQTRDEFAQLFQYKAVFILEELLSPIVTPLILIFCLRPRALEIIDFFRNFTVEVVGVGDTCSFAQMDVRQHGHPQWLSAGQTEASVYQQAEDGKTELSLMHFAITNPGWQPPRESTAFLGFLKEQVQRDGAAASLAQGGLLPENALFTSIQSLQSESEPLSLIANVVAGSSCRGPPLPRDLQGSRHRAEVASALRSFSPLQPGQAPTGRAHSTMTGSGVDARTASSGSSVWEGQLQSLVLSEYASTEMSLHALYMHQLHKQQAQAEPERHLWHRRESDESGESAPDEGGEGARAPQSIPRSASYPCAAPRPGAPETTALHGGFQRRYGGITDPGTVPRAPSHFSRLPLGGWAEDGQSASRHPEPVPEEGSEDELPPQVHKV</sequence>
<comment type="function">
    <text evidence="1 2">Phospholipid scramblase involved in autophagy by mediating autophagosomal membrane expansion. Cycles between the preautophagosomal structure/phagophore assembly site (PAS) and the cytoplasmic vesicle pool and supplies membrane for the growing autophagosome. Lipid scramblase activity plays a key role in preautophagosomal structure/phagophore assembly by distributing the phospholipids that arrive through ATG2 (ATG2A or ATG2B) from the cytoplasmic to the luminal leaflet of the bilayer, thereby driving autophagosomal membrane expansion. Also required to supply phosphatidylinositol 4-phosphate to the autophagosome initiation site by recruiting the phosphatidylinositol 4-kinase beta (PI4KB) in a process dependent on ARFIP2, but not ARFIP1 (By similarity). In addition to autophagy, also plays a role in necrotic cell death (By similarity).</text>
</comment>
<comment type="catalytic activity">
    <reaction evidence="2">
        <text>a 1,2-diacyl-sn-glycero-3-phosphocholine(in) = a 1,2-diacyl-sn-glycero-3-phosphocholine(out)</text>
        <dbReference type="Rhea" id="RHEA:38571"/>
        <dbReference type="ChEBI" id="CHEBI:57643"/>
    </reaction>
</comment>
<comment type="catalytic activity">
    <reaction evidence="2">
        <text>a 1,2-diacyl-sn-glycero-3-phospho-L-serine(in) = a 1,2-diacyl-sn-glycero-3-phospho-L-serine(out)</text>
        <dbReference type="Rhea" id="RHEA:38663"/>
        <dbReference type="ChEBI" id="CHEBI:57262"/>
    </reaction>
</comment>
<comment type="catalytic activity">
    <reaction evidence="2">
        <text>a 1,2-diacyl-sn-glycero-3-phosphoethanolamine(in) = a 1,2-diacyl-sn-glycero-3-phosphoethanolamine(out)</text>
        <dbReference type="Rhea" id="RHEA:38895"/>
        <dbReference type="ChEBI" id="CHEBI:64612"/>
    </reaction>
</comment>
<comment type="subunit">
    <text evidence="2">Homotrimer; forms a homotrimer with a central pore that forms a path between the two membrane leaflets. Interacts (via cytoplasmic its C-terminus) with ATG2A. Interacts with SUPT20H. Interacts (via the tyrosine-based sorting signal motif) with AP4M1; promoting association with the AP-4 complex. Interacts with ARFIP1 and ARFIP2. Interacts with PI4K2A and PI4KB. Interacts with ATG4A; the interaction is direct and promotes ATG9A trafficking.</text>
</comment>
<comment type="subcellular location">
    <subcellularLocation>
        <location evidence="2">Preautophagosomal structure membrane</location>
        <topology evidence="2">Multi-pass membrane protein</topology>
    </subcellularLocation>
    <subcellularLocation>
        <location evidence="2">Cytoplasmic vesicle</location>
        <location evidence="2">Autophagosome membrane</location>
        <topology evidence="2">Multi-pass membrane protein</topology>
    </subcellularLocation>
    <subcellularLocation>
        <location evidence="2">Golgi apparatus</location>
        <location evidence="2">trans-Golgi network membrane</location>
        <topology evidence="2">Multi-pass membrane protein</topology>
    </subcellularLocation>
    <subcellularLocation>
        <location evidence="2">Late endosome membrane</location>
        <topology evidence="2">Multi-pass membrane protein</topology>
    </subcellularLocation>
    <subcellularLocation>
        <location evidence="2">Recycling endosome membrane</location>
        <topology evidence="2">Multi-pass membrane protein</topology>
    </subcellularLocation>
    <subcellularLocation>
        <location evidence="2">Endoplasmic reticulum membrane</location>
        <topology evidence="2">Multi-pass membrane protein</topology>
    </subcellularLocation>
    <subcellularLocation>
        <location evidence="2">Mitochondrion membrane</location>
        <topology evidence="3">Multi-pass membrane protein</topology>
    </subcellularLocation>
    <text evidence="2">Mainly localizes to the trans-Golgi network (TGN) and the endosomal system; cycles between them though vesicle trafficking. Export from the TGN to promote formation of autophagosomes is mediated by the AP-4 complex. Under amino acid starvation or rapamycin treatment, redistributes to preautophagosomal structure/phagophore assembly site (PAS). The starvation-induced redistribution depends on ULK1, ATG13, as well as SH3GLB1. Upon autophagy induction, a small portion transiently localizes to the autophagic membranes. Recruited to damaged mitochondria during mitophagy in a RIMOC1-dependent manner.</text>
</comment>
<comment type="domain">
    <text evidence="2">Forms a homotrimer with a solvated central pore, which is connected laterally to the cytosol through the cavity within each protomer. Acts as a lipid scramblase that uses its central pore to function: the central pore opens laterally to accommodate lipid headgroups, thereby enabling lipid flipping and redistribution of lipids added to the outer leaflet of ATG9A-containing vesicles, thereby enabling growth into autophagosomes.</text>
</comment>
<comment type="domain">
    <text evidence="2">The tyrosine-based sorting signal motif, also named YXX-psi motif, promotes interaction with the AP-4 complex.</text>
</comment>
<comment type="PTM">
    <text evidence="1">Ufmylated in a DDRGK1 dependent manner.</text>
</comment>
<comment type="similarity">
    <text evidence="5">Belongs to the ATG9 family.</text>
</comment>